<protein>
    <recommendedName>
        <fullName>LYR motif-containing protein 5A</fullName>
    </recommendedName>
</protein>
<evidence type="ECO:0000305" key="1"/>
<feature type="chain" id="PRO_0000370337" description="LYR motif-containing protein 5A">
    <location>
        <begin position="1"/>
        <end position="85"/>
    </location>
</feature>
<keyword id="KW-1185">Reference proteome</keyword>
<gene>
    <name type="primary">lyrm5a</name>
    <name type="ORF">zgc:110145</name>
</gene>
<proteinExistence type="inferred from homology"/>
<reference key="1">
    <citation type="submission" date="2008-04" db="EMBL/GenBank/DDBJ databases">
        <authorList>
            <consortium name="NIH - Zebrafish Gene Collection (ZGC) project"/>
        </authorList>
    </citation>
    <scope>NUCLEOTIDE SEQUENCE [LARGE SCALE MRNA]</scope>
    <source>
        <tissue>Brain</tissue>
    </source>
</reference>
<organism>
    <name type="scientific">Danio rerio</name>
    <name type="common">Zebrafish</name>
    <name type="synonym">Brachydanio rerio</name>
    <dbReference type="NCBI Taxonomy" id="7955"/>
    <lineage>
        <taxon>Eukaryota</taxon>
        <taxon>Metazoa</taxon>
        <taxon>Chordata</taxon>
        <taxon>Craniata</taxon>
        <taxon>Vertebrata</taxon>
        <taxon>Euteleostomi</taxon>
        <taxon>Actinopterygii</taxon>
        <taxon>Neopterygii</taxon>
        <taxon>Teleostei</taxon>
        <taxon>Ostariophysi</taxon>
        <taxon>Cypriniformes</taxon>
        <taxon>Danionidae</taxon>
        <taxon>Danioninae</taxon>
        <taxon>Danio</taxon>
    </lineage>
</organism>
<accession>Q503U1</accession>
<sequence length="85" mass="10425">MTNPLRGEVIRLYKNLLYLGREYPKGTAYFRERLKTAFMKNKDVTDPEKIQKLIDRGDFVIKELEALYYLRKYRAMKKRYYEPEH</sequence>
<comment type="similarity">
    <text evidence="1">Belongs to the complex I LYR family.</text>
</comment>
<dbReference type="EMBL" id="BC095184">
    <property type="protein sequence ID" value="AAH95184.1"/>
    <property type="molecule type" value="mRNA"/>
</dbReference>
<dbReference type="EMBL" id="BC165476">
    <property type="protein sequence ID" value="AAI65476.1"/>
    <property type="molecule type" value="mRNA"/>
</dbReference>
<dbReference type="RefSeq" id="NP_001153295.1">
    <property type="nucleotide sequence ID" value="NM_001159823.1"/>
</dbReference>
<dbReference type="SMR" id="Q503U1"/>
<dbReference type="FunCoup" id="Q503U1">
    <property type="interactions" value="499"/>
</dbReference>
<dbReference type="STRING" id="7955.ENSDARP00000137307"/>
<dbReference type="Ensembl" id="ENSDART00000161101">
    <property type="protein sequence ID" value="ENSDARP00000137307"/>
    <property type="gene ID" value="ENSDARG00000099560"/>
</dbReference>
<dbReference type="GeneID" id="553589"/>
<dbReference type="KEGG" id="dre:553589"/>
<dbReference type="AGR" id="ZFIN:ZDB-GENE-050522-203"/>
<dbReference type="CTD" id="553589"/>
<dbReference type="ZFIN" id="ZDB-GENE-050522-203">
    <property type="gene designation" value="lyrm5a"/>
</dbReference>
<dbReference type="InParanoid" id="Q503U1"/>
<dbReference type="OMA" id="RAMNQRY"/>
<dbReference type="OrthoDB" id="10258445at2759"/>
<dbReference type="PhylomeDB" id="Q503U1"/>
<dbReference type="PRO" id="PR:Q503U1"/>
<dbReference type="Proteomes" id="UP000000437">
    <property type="component" value="Chromosome 4"/>
</dbReference>
<dbReference type="Bgee" id="ENSDARG00000099560">
    <property type="expression patterns" value="Expressed in muscle tissue and 21 other cell types or tissues"/>
</dbReference>
<dbReference type="ExpressionAtlas" id="Q503U1">
    <property type="expression patterns" value="baseline and differential"/>
</dbReference>
<dbReference type="GO" id="GO:0005739">
    <property type="term" value="C:mitochondrion"/>
    <property type="evidence" value="ECO:0000318"/>
    <property type="project" value="GO_Central"/>
</dbReference>
<dbReference type="GO" id="GO:0090324">
    <property type="term" value="P:negative regulation of oxidative phosphorylation"/>
    <property type="evidence" value="ECO:0007669"/>
    <property type="project" value="InterPro"/>
</dbReference>
<dbReference type="GO" id="GO:0022904">
    <property type="term" value="P:respiratory electron transport chain"/>
    <property type="evidence" value="ECO:0000318"/>
    <property type="project" value="GO_Central"/>
</dbReference>
<dbReference type="CDD" id="cd20265">
    <property type="entry name" value="Complex1_LYR_ETFRF1_LYRM5"/>
    <property type="match status" value="1"/>
</dbReference>
<dbReference type="InterPro" id="IPR008011">
    <property type="entry name" value="Complex1_LYR_dom"/>
</dbReference>
<dbReference type="InterPro" id="IPR045296">
    <property type="entry name" value="Complex1_LYR_ETFRF1_LYRM5"/>
</dbReference>
<dbReference type="InterPro" id="IPR052000">
    <property type="entry name" value="ETFRF1"/>
</dbReference>
<dbReference type="PANTHER" id="PTHR21024:SF0">
    <property type="entry name" value="ELECTRON TRANSFER FLAVOPROTEIN REGULATORY FACTOR 1"/>
    <property type="match status" value="1"/>
</dbReference>
<dbReference type="PANTHER" id="PTHR21024">
    <property type="entry name" value="GROWTH HORMONE-INDUCIBLE SOLUBLE PROTEIN-RELATED"/>
    <property type="match status" value="1"/>
</dbReference>
<dbReference type="Pfam" id="PF05347">
    <property type="entry name" value="Complex1_LYR"/>
    <property type="match status" value="1"/>
</dbReference>
<name>LYM5A_DANRE</name>